<protein>
    <recommendedName>
        <fullName>Pre-mRNA-splicing factor cwc25</fullName>
    </recommendedName>
</protein>
<organism>
    <name type="scientific">Emericella nidulans (strain FGSC A4 / ATCC 38163 / CBS 112.46 / NRRL 194 / M139)</name>
    <name type="common">Aspergillus nidulans</name>
    <dbReference type="NCBI Taxonomy" id="227321"/>
    <lineage>
        <taxon>Eukaryota</taxon>
        <taxon>Fungi</taxon>
        <taxon>Dikarya</taxon>
        <taxon>Ascomycota</taxon>
        <taxon>Pezizomycotina</taxon>
        <taxon>Eurotiomycetes</taxon>
        <taxon>Eurotiomycetidae</taxon>
        <taxon>Eurotiales</taxon>
        <taxon>Aspergillaceae</taxon>
        <taxon>Aspergillus</taxon>
        <taxon>Aspergillus subgen. Nidulantes</taxon>
    </lineage>
</organism>
<accession>Q5B0I1</accession>
<accession>C8V3G9</accession>
<evidence type="ECO:0000250" key="1"/>
<evidence type="ECO:0000255" key="2"/>
<evidence type="ECO:0000256" key="3">
    <source>
        <dbReference type="SAM" id="MobiDB-lite"/>
    </source>
</evidence>
<evidence type="ECO:0000305" key="4"/>
<keyword id="KW-0175">Coiled coil</keyword>
<keyword id="KW-0507">mRNA processing</keyword>
<keyword id="KW-0508">mRNA splicing</keyword>
<keyword id="KW-0539">Nucleus</keyword>
<keyword id="KW-1185">Reference proteome</keyword>
<keyword id="KW-0747">Spliceosome</keyword>
<dbReference type="EMBL" id="AACD01000101">
    <property type="protein sequence ID" value="EAA57812.1"/>
    <property type="molecule type" value="Genomic_DNA"/>
</dbReference>
<dbReference type="EMBL" id="BN001301">
    <property type="protein sequence ID" value="CBF70503.1"/>
    <property type="molecule type" value="Genomic_DNA"/>
</dbReference>
<dbReference type="RefSeq" id="XP_663553.1">
    <property type="nucleotide sequence ID" value="XM_658461.1"/>
</dbReference>
<dbReference type="SMR" id="Q5B0I1"/>
<dbReference type="STRING" id="227321.Q5B0I1"/>
<dbReference type="EnsemblFungi" id="CBF70503">
    <property type="protein sequence ID" value="CBF70503"/>
    <property type="gene ID" value="ANIA_05949"/>
</dbReference>
<dbReference type="KEGG" id="ani:ANIA_05949"/>
<dbReference type="VEuPathDB" id="FungiDB:AN5949"/>
<dbReference type="eggNOG" id="KOG3869">
    <property type="taxonomic scope" value="Eukaryota"/>
</dbReference>
<dbReference type="HOGENOM" id="CLU_025093_0_0_1"/>
<dbReference type="InParanoid" id="Q5B0I1"/>
<dbReference type="OMA" id="SWHPHTM"/>
<dbReference type="OrthoDB" id="21123at2759"/>
<dbReference type="Proteomes" id="UP000000560">
    <property type="component" value="Chromosome I"/>
</dbReference>
<dbReference type="GO" id="GO:0005684">
    <property type="term" value="C:U2-type spliceosomal complex"/>
    <property type="evidence" value="ECO:0000318"/>
    <property type="project" value="GO_Central"/>
</dbReference>
<dbReference type="GO" id="GO:0000398">
    <property type="term" value="P:mRNA splicing, via spliceosome"/>
    <property type="evidence" value="ECO:0000318"/>
    <property type="project" value="GO_Central"/>
</dbReference>
<dbReference type="InterPro" id="IPR019339">
    <property type="entry name" value="CIR_N_dom"/>
</dbReference>
<dbReference type="InterPro" id="IPR022209">
    <property type="entry name" value="CWC25"/>
</dbReference>
<dbReference type="InterPro" id="IPR051376">
    <property type="entry name" value="CWC25_splicing_factor"/>
</dbReference>
<dbReference type="PANTHER" id="PTHR16196">
    <property type="entry name" value="CELL CYCLE CONTROL PROTEIN CWF25"/>
    <property type="match status" value="1"/>
</dbReference>
<dbReference type="PANTHER" id="PTHR16196:SF0">
    <property type="entry name" value="PRE-MRNA-SPLICING FACTOR CWC25 HOMOLOG"/>
    <property type="match status" value="1"/>
</dbReference>
<dbReference type="Pfam" id="PF10197">
    <property type="entry name" value="Cir_N"/>
    <property type="match status" value="1"/>
</dbReference>
<dbReference type="Pfam" id="PF12542">
    <property type="entry name" value="CWC25"/>
    <property type="match status" value="1"/>
</dbReference>
<dbReference type="SMART" id="SM01083">
    <property type="entry name" value="Cir_N"/>
    <property type="match status" value="1"/>
</dbReference>
<feature type="chain" id="PRO_0000079589" description="Pre-mRNA-splicing factor cwc25">
    <location>
        <begin position="1"/>
        <end position="415"/>
    </location>
</feature>
<feature type="region of interest" description="Disordered" evidence="3">
    <location>
        <begin position="154"/>
        <end position="415"/>
    </location>
</feature>
<feature type="coiled-coil region" evidence="2">
    <location>
        <begin position="15"/>
        <end position="59"/>
    </location>
</feature>
<feature type="compositionally biased region" description="Basic and acidic residues" evidence="3">
    <location>
        <begin position="154"/>
        <end position="180"/>
    </location>
</feature>
<feature type="compositionally biased region" description="Basic residues" evidence="3">
    <location>
        <begin position="194"/>
        <end position="208"/>
    </location>
</feature>
<feature type="compositionally biased region" description="Basic and acidic residues" evidence="3">
    <location>
        <begin position="209"/>
        <end position="260"/>
    </location>
</feature>
<feature type="compositionally biased region" description="Basic and acidic residues" evidence="3">
    <location>
        <begin position="267"/>
        <end position="318"/>
    </location>
</feature>
<feature type="compositionally biased region" description="Basic and acidic residues" evidence="3">
    <location>
        <begin position="355"/>
        <end position="383"/>
    </location>
</feature>
<gene>
    <name type="primary">cwc25</name>
    <name type="ORF">AN5949</name>
</gene>
<name>CWC25_EMENI</name>
<sequence length="415" mass="49789">MGGDLNLKKSWHPSLLRNQERVWAEEKRALEERKRIDQLKRERDEERQIQELQRLQESAGGTRQLQRVDWMYQEPSSASGHYAEEMEGYLLGKRRIDGILLKNDESKKLEKGAATGPGAAAGLPPVVHNTRDTMAKVMADPLLEIRKREQAAYEAMVKESVRRREREQGRERHQERERERGHRHRRDSGNDSHRSHRHRRRSRSRSRSPRVEKDDRRHRDREHDRRSHRDRDGERENRVERVYHSSRRDHDRDERYDRAARRSASPRPDRRRDDRRDRDQDQDYRRDRNSRSSRRDARSSRDRDTDAFGRDRNRDRGSHSRNGNADANADQHAQELEEQRKRRLAEMQANAQDMEATRRQRVAEVTALEEKQREEDDKRRSDRGQFMSGLHRQLQEDSLDERIRRSRGALTKDED</sequence>
<proteinExistence type="inferred from homology"/>
<reference key="1">
    <citation type="journal article" date="2005" name="Nature">
        <title>Sequencing of Aspergillus nidulans and comparative analysis with A. fumigatus and A. oryzae.</title>
        <authorList>
            <person name="Galagan J.E."/>
            <person name="Calvo S.E."/>
            <person name="Cuomo C."/>
            <person name="Ma L.-J."/>
            <person name="Wortman J.R."/>
            <person name="Batzoglou S."/>
            <person name="Lee S.-I."/>
            <person name="Bastuerkmen M."/>
            <person name="Spevak C.C."/>
            <person name="Clutterbuck J."/>
            <person name="Kapitonov V."/>
            <person name="Jurka J."/>
            <person name="Scazzocchio C."/>
            <person name="Farman M.L."/>
            <person name="Butler J."/>
            <person name="Purcell S."/>
            <person name="Harris S."/>
            <person name="Braus G.H."/>
            <person name="Draht O."/>
            <person name="Busch S."/>
            <person name="D'Enfert C."/>
            <person name="Bouchier C."/>
            <person name="Goldman G.H."/>
            <person name="Bell-Pedersen D."/>
            <person name="Griffiths-Jones S."/>
            <person name="Doonan J.H."/>
            <person name="Yu J."/>
            <person name="Vienken K."/>
            <person name="Pain A."/>
            <person name="Freitag M."/>
            <person name="Selker E.U."/>
            <person name="Archer D.B."/>
            <person name="Penalva M.A."/>
            <person name="Oakley B.R."/>
            <person name="Momany M."/>
            <person name="Tanaka T."/>
            <person name="Kumagai T."/>
            <person name="Asai K."/>
            <person name="Machida M."/>
            <person name="Nierman W.C."/>
            <person name="Denning D.W."/>
            <person name="Caddick M.X."/>
            <person name="Hynes M."/>
            <person name="Paoletti M."/>
            <person name="Fischer R."/>
            <person name="Miller B.L."/>
            <person name="Dyer P.S."/>
            <person name="Sachs M.S."/>
            <person name="Osmani S.A."/>
            <person name="Birren B.W."/>
        </authorList>
    </citation>
    <scope>NUCLEOTIDE SEQUENCE [LARGE SCALE GENOMIC DNA]</scope>
    <source>
        <strain>FGSC A4 / ATCC 38163 / CBS 112.46 / NRRL 194 / M139</strain>
    </source>
</reference>
<reference key="2">
    <citation type="journal article" date="2009" name="Fungal Genet. Biol.">
        <title>The 2008 update of the Aspergillus nidulans genome annotation: a community effort.</title>
        <authorList>
            <person name="Wortman J.R."/>
            <person name="Gilsenan J.M."/>
            <person name="Joardar V."/>
            <person name="Deegan J."/>
            <person name="Clutterbuck J."/>
            <person name="Andersen M.R."/>
            <person name="Archer D."/>
            <person name="Bencina M."/>
            <person name="Braus G."/>
            <person name="Coutinho P."/>
            <person name="von Dohren H."/>
            <person name="Doonan J."/>
            <person name="Driessen A.J."/>
            <person name="Durek P."/>
            <person name="Espeso E."/>
            <person name="Fekete E."/>
            <person name="Flipphi M."/>
            <person name="Estrada C.G."/>
            <person name="Geysens S."/>
            <person name="Goldman G."/>
            <person name="de Groot P.W."/>
            <person name="Hansen K."/>
            <person name="Harris S.D."/>
            <person name="Heinekamp T."/>
            <person name="Helmstaedt K."/>
            <person name="Henrissat B."/>
            <person name="Hofmann G."/>
            <person name="Homan T."/>
            <person name="Horio T."/>
            <person name="Horiuchi H."/>
            <person name="James S."/>
            <person name="Jones M."/>
            <person name="Karaffa L."/>
            <person name="Karanyi Z."/>
            <person name="Kato M."/>
            <person name="Keller N."/>
            <person name="Kelly D.E."/>
            <person name="Kiel J.A."/>
            <person name="Kim J.M."/>
            <person name="van der Klei I.J."/>
            <person name="Klis F.M."/>
            <person name="Kovalchuk A."/>
            <person name="Krasevec N."/>
            <person name="Kubicek C.P."/>
            <person name="Liu B."/>
            <person name="Maccabe A."/>
            <person name="Meyer V."/>
            <person name="Mirabito P."/>
            <person name="Miskei M."/>
            <person name="Mos M."/>
            <person name="Mullins J."/>
            <person name="Nelson D.R."/>
            <person name="Nielsen J."/>
            <person name="Oakley B.R."/>
            <person name="Osmani S.A."/>
            <person name="Pakula T."/>
            <person name="Paszewski A."/>
            <person name="Paulsen I."/>
            <person name="Pilsyk S."/>
            <person name="Pocsi I."/>
            <person name="Punt P.J."/>
            <person name="Ram A.F."/>
            <person name="Ren Q."/>
            <person name="Robellet X."/>
            <person name="Robson G."/>
            <person name="Seiboth B."/>
            <person name="van Solingen P."/>
            <person name="Specht T."/>
            <person name="Sun J."/>
            <person name="Taheri-Talesh N."/>
            <person name="Takeshita N."/>
            <person name="Ussery D."/>
            <person name="vanKuyk P.A."/>
            <person name="Visser H."/>
            <person name="van de Vondervoort P.J."/>
            <person name="de Vries R.P."/>
            <person name="Walton J."/>
            <person name="Xiang X."/>
            <person name="Xiong Y."/>
            <person name="Zeng A.P."/>
            <person name="Brandt B.W."/>
            <person name="Cornell M.J."/>
            <person name="van den Hondel C.A."/>
            <person name="Visser J."/>
            <person name="Oliver S.G."/>
            <person name="Turner G."/>
        </authorList>
    </citation>
    <scope>GENOME REANNOTATION</scope>
    <source>
        <strain>FGSC A4 / ATCC 38163 / CBS 112.46 / NRRL 194 / M139</strain>
    </source>
</reference>
<comment type="function">
    <text evidence="1">Involved in pre-mRNA splicing.</text>
</comment>
<comment type="subunit">
    <text evidence="1">Associated with the spliceosome.</text>
</comment>
<comment type="subcellular location">
    <subcellularLocation>
        <location evidence="1">Nucleus</location>
    </subcellularLocation>
</comment>
<comment type="similarity">
    <text evidence="4">Belongs to the CWC25 family.</text>
</comment>